<accession>P00535</accession>
<keyword id="KW-0067">ATP-binding</keyword>
<keyword id="KW-0418">Kinase</keyword>
<keyword id="KW-0547">Nucleotide-binding</keyword>
<keyword id="KW-0553">Oncogene</keyword>
<keyword id="KW-0597">Phosphoprotein</keyword>
<keyword id="KW-0808">Transferase</keyword>
<keyword id="KW-0829">Tyrosine-protein kinase</keyword>
<organismHost>
    <name type="scientific">Galliformes</name>
    <dbReference type="NCBI Taxonomy" id="8976"/>
</organismHost>
<dbReference type="EC" id="2.7.10.1"/>
<dbReference type="EMBL" id="K02006">
    <property type="protein sequence ID" value="AAA42394.1"/>
    <property type="status" value="ALT_INIT"/>
    <property type="molecule type" value="Genomic_RNA"/>
</dbReference>
<dbReference type="EMBL" id="K01216">
    <property type="protein sequence ID" value="AAA42400.1"/>
    <property type="molecule type" value="Genomic_RNA"/>
</dbReference>
<dbReference type="PIR" id="A00644">
    <property type="entry name" value="TVYUH"/>
</dbReference>
<dbReference type="SMR" id="P00535"/>
<dbReference type="BRENDA" id="2.7.10.1">
    <property type="organism ID" value="589"/>
</dbReference>
<dbReference type="GO" id="GO:0005886">
    <property type="term" value="C:plasma membrane"/>
    <property type="evidence" value="ECO:0007669"/>
    <property type="project" value="TreeGrafter"/>
</dbReference>
<dbReference type="GO" id="GO:0043235">
    <property type="term" value="C:receptor complex"/>
    <property type="evidence" value="ECO:0007669"/>
    <property type="project" value="TreeGrafter"/>
</dbReference>
<dbReference type="GO" id="GO:0005524">
    <property type="term" value="F:ATP binding"/>
    <property type="evidence" value="ECO:0007669"/>
    <property type="project" value="UniProtKB-KW"/>
</dbReference>
<dbReference type="GO" id="GO:0048408">
    <property type="term" value="F:epidermal growth factor binding"/>
    <property type="evidence" value="ECO:0007669"/>
    <property type="project" value="TreeGrafter"/>
</dbReference>
<dbReference type="GO" id="GO:0005006">
    <property type="term" value="F:epidermal growth factor receptor activity"/>
    <property type="evidence" value="ECO:0007669"/>
    <property type="project" value="TreeGrafter"/>
</dbReference>
<dbReference type="GO" id="GO:0043066">
    <property type="term" value="P:negative regulation of apoptotic process"/>
    <property type="evidence" value="ECO:0007669"/>
    <property type="project" value="TreeGrafter"/>
</dbReference>
<dbReference type="GO" id="GO:0050679">
    <property type="term" value="P:positive regulation of epithelial cell proliferation"/>
    <property type="evidence" value="ECO:0007669"/>
    <property type="project" value="TreeGrafter"/>
</dbReference>
<dbReference type="CDD" id="cd05108">
    <property type="entry name" value="PTKc_EGFR"/>
    <property type="match status" value="1"/>
</dbReference>
<dbReference type="CDD" id="cd12093">
    <property type="entry name" value="TM_ErbB1"/>
    <property type="match status" value="1"/>
</dbReference>
<dbReference type="FunFam" id="1.10.510.10:FF:000027">
    <property type="entry name" value="Receptor protein-tyrosine kinase"/>
    <property type="match status" value="1"/>
</dbReference>
<dbReference type="FunFam" id="2.10.220.10:FF:000008">
    <property type="entry name" value="Receptor protein-tyrosine kinase"/>
    <property type="match status" value="1"/>
</dbReference>
<dbReference type="FunFam" id="3.30.200.20:FF:000044">
    <property type="entry name" value="Receptor protein-tyrosine kinase"/>
    <property type="match status" value="1"/>
</dbReference>
<dbReference type="Gene3D" id="6.10.250.2930">
    <property type="match status" value="1"/>
</dbReference>
<dbReference type="Gene3D" id="2.10.220.10">
    <property type="entry name" value="Hormone Receptor, Insulin-like Growth Factor Receptor 1, Chain A, domain 2"/>
    <property type="match status" value="1"/>
</dbReference>
<dbReference type="Gene3D" id="3.30.200.20">
    <property type="entry name" value="Phosphorylase Kinase, domain 1"/>
    <property type="match status" value="1"/>
</dbReference>
<dbReference type="Gene3D" id="1.10.510.10">
    <property type="entry name" value="Transferase(Phosphotransferase) domain 1"/>
    <property type="match status" value="1"/>
</dbReference>
<dbReference type="InterPro" id="IPR044912">
    <property type="entry name" value="Egfr_JX_dom"/>
</dbReference>
<dbReference type="InterPro" id="IPR032778">
    <property type="entry name" value="GF_recep_IV"/>
</dbReference>
<dbReference type="InterPro" id="IPR009030">
    <property type="entry name" value="Growth_fac_rcpt_cys_sf"/>
</dbReference>
<dbReference type="InterPro" id="IPR011009">
    <property type="entry name" value="Kinase-like_dom_sf"/>
</dbReference>
<dbReference type="InterPro" id="IPR000719">
    <property type="entry name" value="Prot_kinase_dom"/>
</dbReference>
<dbReference type="InterPro" id="IPR017441">
    <property type="entry name" value="Protein_kinase_ATP_BS"/>
</dbReference>
<dbReference type="InterPro" id="IPR050122">
    <property type="entry name" value="RTK"/>
</dbReference>
<dbReference type="InterPro" id="IPR001245">
    <property type="entry name" value="Ser-Thr/Tyr_kinase_cat_dom"/>
</dbReference>
<dbReference type="InterPro" id="IPR049328">
    <property type="entry name" value="TM_ErbB1"/>
</dbReference>
<dbReference type="InterPro" id="IPR008266">
    <property type="entry name" value="Tyr_kinase_AS"/>
</dbReference>
<dbReference type="InterPro" id="IPR020635">
    <property type="entry name" value="Tyr_kinase_cat_dom"/>
</dbReference>
<dbReference type="PANTHER" id="PTHR24416:SF91">
    <property type="entry name" value="EPIDERMAL GROWTH FACTOR RECEPTOR"/>
    <property type="match status" value="1"/>
</dbReference>
<dbReference type="PANTHER" id="PTHR24416">
    <property type="entry name" value="TYROSINE-PROTEIN KINASE RECEPTOR"/>
    <property type="match status" value="1"/>
</dbReference>
<dbReference type="Pfam" id="PF14843">
    <property type="entry name" value="GF_recep_IV"/>
    <property type="match status" value="1"/>
</dbReference>
<dbReference type="Pfam" id="PF07714">
    <property type="entry name" value="PK_Tyr_Ser-Thr"/>
    <property type="match status" value="1"/>
</dbReference>
<dbReference type="Pfam" id="PF21314">
    <property type="entry name" value="TM_ErbB1"/>
    <property type="match status" value="1"/>
</dbReference>
<dbReference type="PRINTS" id="PR00109">
    <property type="entry name" value="TYRKINASE"/>
</dbReference>
<dbReference type="SMART" id="SM00219">
    <property type="entry name" value="TyrKc"/>
    <property type="match status" value="1"/>
</dbReference>
<dbReference type="SUPFAM" id="SSF57184">
    <property type="entry name" value="Growth factor receptor domain"/>
    <property type="match status" value="1"/>
</dbReference>
<dbReference type="SUPFAM" id="SSF56112">
    <property type="entry name" value="Protein kinase-like (PK-like)"/>
    <property type="match status" value="1"/>
</dbReference>
<dbReference type="PROSITE" id="PS00107">
    <property type="entry name" value="PROTEIN_KINASE_ATP"/>
    <property type="match status" value="1"/>
</dbReference>
<dbReference type="PROSITE" id="PS50011">
    <property type="entry name" value="PROTEIN_KINASE_DOM"/>
    <property type="match status" value="1"/>
</dbReference>
<dbReference type="PROSITE" id="PS00109">
    <property type="entry name" value="PROTEIN_KINASE_TYR"/>
    <property type="match status" value="1"/>
</dbReference>
<proteinExistence type="inferred from homology"/>
<feature type="chain" id="PRO_0000160252" description="Tyrosine-protein kinase transforming protein erbB">
    <location>
        <begin position="1"/>
        <end position="604"/>
    </location>
</feature>
<feature type="domain" description="Protein kinase" evidence="1">
    <location>
        <begin position="132"/>
        <end position="399"/>
    </location>
</feature>
<feature type="active site" description="Proton acceptor" evidence="1 2">
    <location>
        <position position="257"/>
    </location>
</feature>
<feature type="binding site" evidence="1">
    <location>
        <begin position="138"/>
        <end position="146"/>
    </location>
    <ligand>
        <name>ATP</name>
        <dbReference type="ChEBI" id="CHEBI:30616"/>
    </ligand>
</feature>
<feature type="binding site" evidence="1">
    <location>
        <position position="165"/>
    </location>
    <ligand>
        <name>ATP</name>
        <dbReference type="ChEBI" id="CHEBI:30616"/>
    </ligand>
</feature>
<feature type="sequence conflict" description="In Ref. 2; AAA42394." evidence="3" ref="2">
    <original>R</original>
    <variation>W</variation>
    <location>
        <position position="29"/>
    </location>
</feature>
<feature type="sequence conflict" description="In Ref. 2; AAA42394." evidence="3" ref="2">
    <original>S</original>
    <variation>F</variation>
    <location>
        <position position="140"/>
    </location>
</feature>
<feature type="sequence conflict" description="In Ref. 2; AAA42394." evidence="3" ref="2">
    <original>I</original>
    <variation>V</variation>
    <location>
        <position position="146"/>
    </location>
</feature>
<reference key="1">
    <citation type="journal article" date="1983" name="Cell">
        <title>The erbB gene of avian erythroblastosis virus is a member of the src gene family.</title>
        <authorList>
            <person name="Yamamoto T."/>
            <person name="Nishida T."/>
            <person name="Miyajima N."/>
            <person name="Kawai S."/>
            <person name="Ooi T."/>
            <person name="Toyoshima K."/>
        </authorList>
    </citation>
    <scope>NUCLEOTIDE SEQUENCE [GENOMIC RNA]</scope>
    <source>
        <strain>H</strain>
    </source>
</reference>
<reference key="2">
    <citation type="journal article" date="1984" name="Science">
        <title>Sequencing the erbA gene of avian erythroblastosis virus reveals a new type of oncogene.</title>
        <authorList>
            <person name="Debuire B."/>
            <person name="Henry C."/>
            <person name="Benaissa M."/>
            <person name="Biserte G."/>
            <person name="Claverie J.-M."/>
            <person name="Saule S."/>
            <person name="Martin P."/>
            <person name="Stehelin D."/>
        </authorList>
    </citation>
    <scope>NUCLEOTIDE SEQUENCE [GENOMIC RNA] OF 1-152</scope>
</reference>
<gene>
    <name type="primary">V-ERBB</name>
</gene>
<comment type="function">
    <text>The v-erbB oncogene transforms avian fibroblasts and erythroblasts in culture and induces sarcomas and erythroleukemias in chickens. It is a truncated and mutated version of the receptor for epidermal growth factor.</text>
</comment>
<comment type="catalytic activity">
    <reaction evidence="2">
        <text>L-tyrosyl-[protein] + ATP = O-phospho-L-tyrosyl-[protein] + ADP + H(+)</text>
        <dbReference type="Rhea" id="RHEA:10596"/>
        <dbReference type="Rhea" id="RHEA-COMP:10136"/>
        <dbReference type="Rhea" id="RHEA-COMP:20101"/>
        <dbReference type="ChEBI" id="CHEBI:15378"/>
        <dbReference type="ChEBI" id="CHEBI:30616"/>
        <dbReference type="ChEBI" id="CHEBI:46858"/>
        <dbReference type="ChEBI" id="CHEBI:61978"/>
        <dbReference type="ChEBI" id="CHEBI:456216"/>
        <dbReference type="EC" id="2.7.10.1"/>
    </reaction>
</comment>
<comment type="similarity">
    <text evidence="1">Belongs to the protein kinase superfamily. Tyr protein kinase family. EGF receptor subfamily.</text>
</comment>
<comment type="sequence caution" evidence="3">
    <conflict type="erroneous initiation">
        <sequence resource="EMBL-CDS" id="AAA42394"/>
    </conflict>
</comment>
<organism>
    <name type="scientific">Avian erythroblastosis virus (strain ES4)</name>
    <dbReference type="NCBI Taxonomy" id="79685"/>
    <lineage>
        <taxon>Viruses</taxon>
        <taxon>Riboviria</taxon>
        <taxon>Pararnavirae</taxon>
        <taxon>Artverviricota</taxon>
        <taxon>Revtraviricetes</taxon>
        <taxon>Ortervirales</taxon>
        <taxon>Retroviridae</taxon>
        <taxon>Orthoretrovirinae</taxon>
        <taxon>Alpharetrovirus</taxon>
        <taxon>Avian leukosis virus</taxon>
    </lineage>
</organism>
<protein>
    <recommendedName>
        <fullName>Tyrosine-protein kinase transforming protein erbB</fullName>
        <ecNumber>2.7.10.1</ecNumber>
    </recommendedName>
</protein>
<sequence length="604" mass="67633">MKCAHFIDGPHCVKACPAGVLGENDTLVRKYADANAVCQLCHPNCTRGCKGPGLEGCPNGSKTPSIAAGVVGGLLCLVVVGLGIGLYLRRRHIVRKRTLRRLLQERELVEPLTPSGEAPNQAHLRILKETEFKKVKVLGSGAFGTIYKGLWIPEGEKVKIPVAIKELREATSPKANKEILDEAYVMASVDNPHVCRLLGICLTSTVQLITQLMPYGCLLDYIREHKDNIGSQYLLNWCVQIAKGMNYLEERRLVHRDLAARNVLVKTPQHVKITDFGLAKLLGADEKEYHAEGGKVPIKWMALESILHRIYTHQSDVWSYGVTVWELMTFGSKPYDGIPASEISSVLEKGERLPQPPICTIDVYMIMVKCWMIDADSRPKFRELIAEFSKMARDPPRYLVIQGDERMHLPSPTDSKFYRTLMEEEDMEDIVDADEYLVPHQGFFNSPSTSRTPLLSSLSATSNNSATNCIDRNGQGHPVREDSFVQRYSSDPTGNFLEESIDDGFLPAPEYVNQLMPKKPSTAMVQNQIYNFISLTAISKLPMDSRYQNSHSTAVDNPEYLNTNQSPLAKTVFESSPYWIQSGNHQINLDNPDYQQDFLPTSCS</sequence>
<evidence type="ECO:0000255" key="1">
    <source>
        <dbReference type="PROSITE-ProRule" id="PRU00159"/>
    </source>
</evidence>
<evidence type="ECO:0000255" key="2">
    <source>
        <dbReference type="PROSITE-ProRule" id="PRU10028"/>
    </source>
</evidence>
<evidence type="ECO:0000305" key="3"/>
<name>ERBB_AVIER</name>